<proteinExistence type="inferred from homology"/>
<keyword id="KW-1185">Reference proteome</keyword>
<keyword id="KW-0678">Repressor</keyword>
<keyword id="KW-0804">Transcription</keyword>
<keyword id="KW-0805">Transcription regulation</keyword>
<organism>
    <name type="scientific">Escherichia coli O157:H7</name>
    <dbReference type="NCBI Taxonomy" id="83334"/>
    <lineage>
        <taxon>Bacteria</taxon>
        <taxon>Pseudomonadati</taxon>
        <taxon>Pseudomonadota</taxon>
        <taxon>Gammaproteobacteria</taxon>
        <taxon>Enterobacterales</taxon>
        <taxon>Enterobacteriaceae</taxon>
        <taxon>Escherichia</taxon>
    </lineage>
</organism>
<feature type="chain" id="PRO_0000201334" description="Probable transcriptional regulator YgiV">
    <location>
        <begin position="1"/>
        <end position="160"/>
    </location>
</feature>
<dbReference type="EMBL" id="AE005174">
    <property type="protein sequence ID" value="AAG58157.1"/>
    <property type="molecule type" value="Genomic_DNA"/>
</dbReference>
<dbReference type="EMBL" id="BA000007">
    <property type="protein sequence ID" value="BAB37328.1"/>
    <property type="molecule type" value="Genomic_DNA"/>
</dbReference>
<dbReference type="PIR" id="A85962">
    <property type="entry name" value="A85962"/>
</dbReference>
<dbReference type="PIR" id="A98117">
    <property type="entry name" value="A98117"/>
</dbReference>
<dbReference type="RefSeq" id="NP_311932.1">
    <property type="nucleotide sequence ID" value="NC_002695.1"/>
</dbReference>
<dbReference type="RefSeq" id="WP_000183479.1">
    <property type="nucleotide sequence ID" value="NZ_VOAI01000009.1"/>
</dbReference>
<dbReference type="SMR" id="Q8XBS4"/>
<dbReference type="STRING" id="155864.Z4375"/>
<dbReference type="GeneID" id="916269"/>
<dbReference type="KEGG" id="ece:Z4375"/>
<dbReference type="KEGG" id="ecs:ECs_3905"/>
<dbReference type="PATRIC" id="fig|386585.9.peg.4073"/>
<dbReference type="eggNOG" id="COG3449">
    <property type="taxonomic scope" value="Bacteria"/>
</dbReference>
<dbReference type="HOGENOM" id="CLU_129801_0_0_6"/>
<dbReference type="OMA" id="IVNIEPI"/>
<dbReference type="Proteomes" id="UP000000558">
    <property type="component" value="Chromosome"/>
</dbReference>
<dbReference type="Proteomes" id="UP000002519">
    <property type="component" value="Chromosome"/>
</dbReference>
<dbReference type="Gene3D" id="3.20.80.10">
    <property type="entry name" value="Regulatory factor, effector binding domain"/>
    <property type="match status" value="1"/>
</dbReference>
<dbReference type="InterPro" id="IPR010499">
    <property type="entry name" value="AraC_E-bd"/>
</dbReference>
<dbReference type="InterPro" id="IPR050908">
    <property type="entry name" value="DNA_gyrase_inhibitor"/>
</dbReference>
<dbReference type="InterPro" id="IPR029442">
    <property type="entry name" value="GyrI-like"/>
</dbReference>
<dbReference type="InterPro" id="IPR011256">
    <property type="entry name" value="Reg_factor_effector_dom_sf"/>
</dbReference>
<dbReference type="PANTHER" id="PTHR40055">
    <property type="entry name" value="TRANSCRIPTIONAL REGULATOR YGIV-RELATED"/>
    <property type="match status" value="1"/>
</dbReference>
<dbReference type="PANTHER" id="PTHR40055:SF1">
    <property type="entry name" value="TRANSCRIPTIONAL REGULATOR YGIV-RELATED"/>
    <property type="match status" value="1"/>
</dbReference>
<dbReference type="Pfam" id="PF06445">
    <property type="entry name" value="GyrI-like"/>
    <property type="match status" value="1"/>
</dbReference>
<dbReference type="SMART" id="SM00871">
    <property type="entry name" value="AraC_E_bind"/>
    <property type="match status" value="1"/>
</dbReference>
<dbReference type="SUPFAM" id="SSF55136">
    <property type="entry name" value="Probable bacterial effector-binding domain"/>
    <property type="match status" value="1"/>
</dbReference>
<sequence length="160" mass="17909">MTNLTLDVNIIDFPSIPVAMLPHRCRPELLNYSVAKFIMWRKETGLSPVNQSQTFGVAWDDPATTAPEAFRFDICGSVSEPIPDNRYGVSNGELTGGRYAVARHVGELDDISHTIWGIIRHWLPASGEKMRKAPILFHYTNLAEGVTEQRLETNVYVPLA</sequence>
<protein>
    <recommendedName>
        <fullName>Probable transcriptional regulator YgiV</fullName>
    </recommendedName>
</protein>
<reference key="1">
    <citation type="journal article" date="2001" name="Nature">
        <title>Genome sequence of enterohaemorrhagic Escherichia coli O157:H7.</title>
        <authorList>
            <person name="Perna N.T."/>
            <person name="Plunkett G. III"/>
            <person name="Burland V."/>
            <person name="Mau B."/>
            <person name="Glasner J.D."/>
            <person name="Rose D.J."/>
            <person name="Mayhew G.F."/>
            <person name="Evans P.S."/>
            <person name="Gregor J."/>
            <person name="Kirkpatrick H.A."/>
            <person name="Posfai G."/>
            <person name="Hackett J."/>
            <person name="Klink S."/>
            <person name="Boutin A."/>
            <person name="Shao Y."/>
            <person name="Miller L."/>
            <person name="Grotbeck E.J."/>
            <person name="Davis N.W."/>
            <person name="Lim A."/>
            <person name="Dimalanta E.T."/>
            <person name="Potamousis K."/>
            <person name="Apodaca J."/>
            <person name="Anantharaman T.S."/>
            <person name="Lin J."/>
            <person name="Yen G."/>
            <person name="Schwartz D.C."/>
            <person name="Welch R.A."/>
            <person name="Blattner F.R."/>
        </authorList>
    </citation>
    <scope>NUCLEOTIDE SEQUENCE [LARGE SCALE GENOMIC DNA]</scope>
    <source>
        <strain>O157:H7 / EDL933 / ATCC 700927 / EHEC</strain>
    </source>
</reference>
<reference key="2">
    <citation type="journal article" date="2001" name="DNA Res.">
        <title>Complete genome sequence of enterohemorrhagic Escherichia coli O157:H7 and genomic comparison with a laboratory strain K-12.</title>
        <authorList>
            <person name="Hayashi T."/>
            <person name="Makino K."/>
            <person name="Ohnishi M."/>
            <person name="Kurokawa K."/>
            <person name="Ishii K."/>
            <person name="Yokoyama K."/>
            <person name="Han C.-G."/>
            <person name="Ohtsubo E."/>
            <person name="Nakayama K."/>
            <person name="Murata T."/>
            <person name="Tanaka M."/>
            <person name="Tobe T."/>
            <person name="Iida T."/>
            <person name="Takami H."/>
            <person name="Honda T."/>
            <person name="Sasakawa C."/>
            <person name="Ogasawara N."/>
            <person name="Yasunaga T."/>
            <person name="Kuhara S."/>
            <person name="Shiba T."/>
            <person name="Hattori M."/>
            <person name="Shinagawa H."/>
        </authorList>
    </citation>
    <scope>NUCLEOTIDE SEQUENCE [LARGE SCALE GENOMIC DNA]</scope>
    <source>
        <strain>O157:H7 / Sakai / RIMD 0509952 / EHEC</strain>
    </source>
</reference>
<comment type="function">
    <text evidence="1">Represses expression of mcbR.</text>
</comment>
<accession>Q8XBS4</accession>
<gene>
    <name type="primary">ygiV</name>
    <name type="ordered locus">Z4375</name>
    <name type="ordered locus">ECs3905</name>
</gene>
<name>YGIV_ECO57</name>
<evidence type="ECO:0000250" key="1"/>